<reference key="1">
    <citation type="journal article" date="2008" name="Mol. Microbiol.">
        <title>The Galpha subunit BCG1, the phospholipase C (BcPLC1) and the calcineurin phosphatase co-ordinately regulate gene expression in the grey mould fungus Botrytis cinerea.</title>
        <authorList>
            <person name="Schumacher J."/>
            <person name="Viaud M."/>
            <person name="Simon A."/>
            <person name="Tudzynski B."/>
        </authorList>
    </citation>
    <scope>NUCLEOTIDE SEQUENCE [GENOMIC DNA]</scope>
    <scope>INDUCTION</scope>
    <source>
        <strain>B05.10</strain>
    </source>
</reference>
<reference key="2">
    <citation type="journal article" date="2011" name="Mol. Plant Pathol.">
        <title>The Botrytis cinerea phytotoxin botcinic acid requires two polyketide synthases for production and has a redundant role in virulence with botrydial.</title>
        <authorList>
            <person name="Dalmais B."/>
            <person name="Schumacher J."/>
            <person name="Moraga J."/>
            <person name="Le Pecheur P."/>
            <person name="Tudzynski B."/>
            <person name="Collado I.G."/>
            <person name="Viaud M."/>
        </authorList>
    </citation>
    <scope>FUNCTION</scope>
    <scope>INDUCTION</scope>
    <scope>PATHWAY</scope>
</reference>
<reference key="3">
    <citation type="journal article" date="2013" name="ChemBioChem">
        <title>A shared biosynthetic pathway for botcinins and botrylactones revealed through gene deletions.</title>
        <authorList>
            <person name="Massaroli M."/>
            <person name="Moraga J."/>
            <person name="Bastos Borges K."/>
            <person name="Ramirez-Fernandez J."/>
            <person name="Viaud M."/>
            <person name="Gonzalez Collado I."/>
            <person name="Duran-Patron R."/>
            <person name="Hernandez-Galan R."/>
        </authorList>
    </citation>
    <scope>FUNCTION</scope>
    <scope>PATHWAY</scope>
</reference>
<gene>
    <name evidence="6" type="primary">BOA2</name>
    <name evidence="5" type="synonym">MO1</name>
</gene>
<evidence type="ECO:0000250" key="1">
    <source>
        <dbReference type="UniProtKB" id="H3JQW0"/>
    </source>
</evidence>
<evidence type="ECO:0000269" key="2">
    <source>
    </source>
</evidence>
<evidence type="ECO:0000269" key="3">
    <source>
    </source>
</evidence>
<evidence type="ECO:0000269" key="4">
    <source>
    </source>
</evidence>
<evidence type="ECO:0000303" key="5">
    <source>
    </source>
</evidence>
<evidence type="ECO:0000303" key="6">
    <source>
    </source>
</evidence>
<evidence type="ECO:0000305" key="7"/>
<evidence type="ECO:0000305" key="8">
    <source>
    </source>
</evidence>
<evidence type="ECO:0000305" key="9">
    <source>
    </source>
</evidence>
<protein>
    <recommendedName>
        <fullName evidence="6">FAD-binding monooxygenase BOA2</fullName>
        <ecNumber evidence="8">1.14.13.-</ecNumber>
    </recommendedName>
    <alternativeName>
        <fullName evidence="6">Botcinic acid biosynthesis cluster A protein 2</fullName>
    </alternativeName>
</protein>
<accession>B1GVX4</accession>
<sequence length="529" mass="61060">MSSEKMPIETLQADEHRFAIILGAGAAGIIQGCTFIREKTLPLEEFQILERQSAFGGVWWKNTYPGAACDIPSHEYQISFALNPYWSRTFAPQPEIQKYFEDVALQYELHKSTTFNTEIVEAKWDDSRLLWLVETTDLTTGDTKLWSCHVLIGALGAFTVPKKAPVKNVDAFKGEEWHSVDWPKNANLKGKTVAVIGTGPSACQFIPNIYPEVKSLIVYQRSPGHVLPRNDVVVGSLTKWMFAHIPFLMRFNRWFWMKKDEILRPRLFTVGSWLQKIVISMTRNHLYKQIKDDTLRRKLESKDVFGCKRPLMLSDYYPIFNNDNVELVTDSVTELTENGIKSRNTDTGEEMERETDVLIWGTGYNPVDFGLPVPTKGRSGQLLCDKYQPELFSLYGVAVDDFPNYFNFLGPNSSSFETSVMELFELQAHHNSIATEYLFQKNVGTFRYAIMPKEERVRSWTLSLRPGQAKLPPANPNCKSYYRSKIGHVYRYPYPYWQYKALIAKLDFKRDWVLLQQRIGQKEVKVLEF</sequence>
<organism>
    <name type="scientific">Botryotinia fuckeliana (strain B05.10)</name>
    <name type="common">Noble rot fungus</name>
    <name type="synonym">Botrytis cinerea</name>
    <dbReference type="NCBI Taxonomy" id="332648"/>
    <lineage>
        <taxon>Eukaryota</taxon>
        <taxon>Fungi</taxon>
        <taxon>Dikarya</taxon>
        <taxon>Ascomycota</taxon>
        <taxon>Pezizomycotina</taxon>
        <taxon>Leotiomycetes</taxon>
        <taxon>Helotiales</taxon>
        <taxon>Sclerotiniaceae</taxon>
        <taxon>Botrytis</taxon>
    </lineage>
</organism>
<feature type="chain" id="PRO_0000444658" description="FAD-binding monooxygenase BOA2">
    <location>
        <begin position="1"/>
        <end position="529"/>
    </location>
</feature>
<feature type="binding site" evidence="1">
    <location>
        <begin position="58"/>
        <end position="61"/>
    </location>
    <ligand>
        <name>FAD</name>
        <dbReference type="ChEBI" id="CHEBI:57692"/>
    </ligand>
</feature>
<feature type="binding site" evidence="1">
    <location>
        <begin position="68"/>
        <end position="70"/>
    </location>
    <ligand>
        <name>NADP(+)</name>
        <dbReference type="ChEBI" id="CHEBI:58349"/>
    </ligand>
</feature>
<feature type="binding site" evidence="1">
    <location>
        <begin position="70"/>
        <end position="71"/>
    </location>
    <ligand>
        <name>FAD</name>
        <dbReference type="ChEBI" id="CHEBI:57692"/>
    </ligand>
</feature>
<feature type="binding site" evidence="1">
    <location>
        <position position="76"/>
    </location>
    <ligand>
        <name>FAD</name>
        <dbReference type="ChEBI" id="CHEBI:57692"/>
    </ligand>
</feature>
<feature type="binding site" evidence="1">
    <location>
        <begin position="198"/>
        <end position="204"/>
    </location>
    <ligand>
        <name>NADP(+)</name>
        <dbReference type="ChEBI" id="CHEBI:58349"/>
    </ligand>
</feature>
<feature type="binding site" evidence="1">
    <location>
        <begin position="221"/>
        <end position="222"/>
    </location>
    <ligand>
        <name>NADP(+)</name>
        <dbReference type="ChEBI" id="CHEBI:58349"/>
    </ligand>
</feature>
<dbReference type="EC" id="1.14.13.-" evidence="8"/>
<dbReference type="EMBL" id="AM930229">
    <property type="protein sequence ID" value="CAP58783.1"/>
    <property type="molecule type" value="Genomic_DNA"/>
</dbReference>
<dbReference type="SMR" id="B1GVX4"/>
<dbReference type="EnsemblFungi" id="Bcin01g00020.1">
    <property type="protein sequence ID" value="Bcin01p00020.1"/>
    <property type="gene ID" value="Bcin01g00020"/>
</dbReference>
<dbReference type="VEuPathDB" id="FungiDB:Bcin01g00020"/>
<dbReference type="OrthoDB" id="74360at2759"/>
<dbReference type="PHI-base" id="PHI:2289"/>
<dbReference type="GO" id="GO:0050660">
    <property type="term" value="F:flavin adenine dinucleotide binding"/>
    <property type="evidence" value="ECO:0007669"/>
    <property type="project" value="InterPro"/>
</dbReference>
<dbReference type="GO" id="GO:0004499">
    <property type="term" value="F:N,N-dimethylaniline monooxygenase activity"/>
    <property type="evidence" value="ECO:0007669"/>
    <property type="project" value="InterPro"/>
</dbReference>
<dbReference type="GO" id="GO:0050661">
    <property type="term" value="F:NADP binding"/>
    <property type="evidence" value="ECO:0007669"/>
    <property type="project" value="InterPro"/>
</dbReference>
<dbReference type="Gene3D" id="3.50.50.60">
    <property type="entry name" value="FAD/NAD(P)-binding domain"/>
    <property type="match status" value="2"/>
</dbReference>
<dbReference type="InterPro" id="IPR051209">
    <property type="entry name" value="FAD-bind_Monooxygenase_sf"/>
</dbReference>
<dbReference type="InterPro" id="IPR036188">
    <property type="entry name" value="FAD/NAD-bd_sf"/>
</dbReference>
<dbReference type="InterPro" id="IPR020946">
    <property type="entry name" value="Flavin_mOase-like"/>
</dbReference>
<dbReference type="PANTHER" id="PTHR42877:SF7">
    <property type="entry name" value="FLAVIN-BINDING MONOOXYGENASE-RELATED"/>
    <property type="match status" value="1"/>
</dbReference>
<dbReference type="PANTHER" id="PTHR42877">
    <property type="entry name" value="L-ORNITHINE N(5)-MONOOXYGENASE-RELATED"/>
    <property type="match status" value="1"/>
</dbReference>
<dbReference type="Pfam" id="PF00743">
    <property type="entry name" value="FMO-like"/>
    <property type="match status" value="1"/>
</dbReference>
<dbReference type="SUPFAM" id="SSF51905">
    <property type="entry name" value="FAD/NAD(P)-binding domain"/>
    <property type="match status" value="2"/>
</dbReference>
<name>BOA2_BOTFB</name>
<proteinExistence type="evidence at transcript level"/>
<comment type="function">
    <text evidence="2 3 4 9">FAD-binding monooxygenase; part of the gene cluster A that mediates the biosynthesis of botcinic acid and its botcinin derivatives, acetate-derived polyketides that contribute to virulence when combined with the sesquiterpene botrydial (PubMed:18208491, PubMed:21722295). Botcinic acid and its derivatives have been shown to induce chlorosis and necrosis during host plant infection, but also have antifungal activities (PubMed:18208491, PubMed:21722295). Two polyketide synthases, BOA6 and BOA9, are involved in the biosynthesis of botcinins. BOA6 mediates the formation of the per-methylated tetraketide core by condensation of four units of malonyl-CoA with one unit of acetyl-CoA, which would be methylated in activated methylene groups to yield a bicyclic acid intermediate that could then either be converted to botrylactone derivatives or lose the starter acetate unit through a retro-Claisen type C-C bond cleavage to yield botcinin derivatives (PubMed:23203902). The second polyketide synthase, BOA9, is probably required for the biosynthesis of the tetraketide side chain of botcinins (Probable). The methyltransferase (MT) domain within BOA6 is probably responsible for the incorporation of four methyl groups (Probable). The trans-enoyl reductase BOA5 might take over the enoyl reductase function of BOA6 that misses an ER domain (Probable). The monooxygenases BOA2, BOA3 and BOA4 might be involved in further hydroxylations at C4, C5 and C8, whereas BOA7, close to BOA9, could potentially be involved in the hydroxylation at C4 in the side chain of botcinins (Probable).</text>
</comment>
<comment type="cofactor">
    <cofactor evidence="1">
        <name>FAD</name>
        <dbReference type="ChEBI" id="CHEBI:57692"/>
    </cofactor>
    <text evidence="1">Binds 1 FAD per subunit.</text>
</comment>
<comment type="pathway">
    <text evidence="8 9">Polyketide biosynthesis.</text>
</comment>
<comment type="induction">
    <text evidence="2 3">Expression of the botcinic acid clusters genes BOA1-13 and BOA17 is coregulated by BCG1 during both in vitro and in planta growth.</text>
</comment>
<comment type="similarity">
    <text evidence="7">Belongs to the FAD-binding monooxygenase family.</text>
</comment>
<keyword id="KW-0274">FAD</keyword>
<keyword id="KW-0285">Flavoprotein</keyword>
<keyword id="KW-0503">Monooxygenase</keyword>
<keyword id="KW-0521">NADP</keyword>
<keyword id="KW-0560">Oxidoreductase</keyword>
<keyword id="KW-0843">Virulence</keyword>